<protein>
    <recommendedName>
        <fullName evidence="1">N-acetyldiaminopimelate deacetylase</fullName>
        <ecNumber evidence="1">3.5.1.47</ecNumber>
    </recommendedName>
</protein>
<keyword id="KW-0028">Amino-acid biosynthesis</keyword>
<keyword id="KW-0220">Diaminopimelate biosynthesis</keyword>
<keyword id="KW-0378">Hydrolase</keyword>
<keyword id="KW-0457">Lysine biosynthesis</keyword>
<sequence length="374" mass="41691">MEKERLIAIRRDLHRIPEIGFQEYKTQQYLLNLLNQYPEERIEIETWRTGIFVKVNGTAPEKMLAYRADIDALSIEEQTGLPFASEHPGFMHACGHDMHMTIALGIIDHFVHHPVKHDLLFLFQPAEEGPGGAEPMLESDVLKKWTPDLITALHIAPELPVGTISTKSGLLFANTSELVIDLEGKGGHAAYPHTADDMVVAASTLVTQLQTVISRNTDPLDSAVITVGTITGGTAQNIIAEHAHLEGTIRTLSEESMRMVKKRIEELVKGIEIGFRCKGKVTYPSVYHQVYNTSGLTEEFMQFVSDHQLADVRTAKEAMTGEDFGYMLKKYPGFMFWLGADSSHGLHHAKLNPDEDAMETAVNVMVGYFSKYAN</sequence>
<accession>A7Z433</accession>
<comment type="function">
    <text evidence="1">Catalyzes the conversion of N-acetyl-diaminopimelate to diaminopimelate and acetate.</text>
</comment>
<comment type="catalytic activity">
    <reaction evidence="1">
        <text>N-acetyl-(2S,6S)-2,6-diaminopimelate + H2O = (2S,6S)-2,6-diaminopimelate + acetate</text>
        <dbReference type="Rhea" id="RHEA:20405"/>
        <dbReference type="ChEBI" id="CHEBI:15377"/>
        <dbReference type="ChEBI" id="CHEBI:30089"/>
        <dbReference type="ChEBI" id="CHEBI:57609"/>
        <dbReference type="ChEBI" id="CHEBI:58767"/>
        <dbReference type="EC" id="3.5.1.47"/>
    </reaction>
</comment>
<comment type="pathway">
    <text evidence="1">Amino-acid biosynthesis; L-lysine biosynthesis via DAP pathway; LL-2,6-diaminopimelate from (S)-tetrahydrodipicolinate (acetylase route): step 3/3.</text>
</comment>
<comment type="similarity">
    <text evidence="1">Belongs to the peptidase M20A family. N-acetyldiaminopimelate deacetylase subfamily.</text>
</comment>
<evidence type="ECO:0000255" key="1">
    <source>
        <dbReference type="HAMAP-Rule" id="MF_01692"/>
    </source>
</evidence>
<organism>
    <name type="scientific">Bacillus velezensis (strain DSM 23117 / BGSC 10A6 / LMG 26770 / FZB42)</name>
    <name type="common">Bacillus amyloliquefaciens subsp. plantarum</name>
    <dbReference type="NCBI Taxonomy" id="326423"/>
    <lineage>
        <taxon>Bacteria</taxon>
        <taxon>Bacillati</taxon>
        <taxon>Bacillota</taxon>
        <taxon>Bacilli</taxon>
        <taxon>Bacillales</taxon>
        <taxon>Bacillaceae</taxon>
        <taxon>Bacillus</taxon>
        <taxon>Bacillus amyloliquefaciens group</taxon>
    </lineage>
</organism>
<proteinExistence type="inferred from homology"/>
<gene>
    <name type="ordered locus">RBAM_013960</name>
</gene>
<reference key="1">
    <citation type="journal article" date="2007" name="Nat. Biotechnol.">
        <title>Comparative analysis of the complete genome sequence of the plant growth-promoting bacterium Bacillus amyloliquefaciens FZB42.</title>
        <authorList>
            <person name="Chen X.H."/>
            <person name="Koumoutsi A."/>
            <person name="Scholz R."/>
            <person name="Eisenreich A."/>
            <person name="Schneider K."/>
            <person name="Heinemeyer I."/>
            <person name="Morgenstern B."/>
            <person name="Voss B."/>
            <person name="Hess W.R."/>
            <person name="Reva O."/>
            <person name="Junge H."/>
            <person name="Voigt B."/>
            <person name="Jungblut P.R."/>
            <person name="Vater J."/>
            <person name="Suessmuth R."/>
            <person name="Liesegang H."/>
            <person name="Strittmatter A."/>
            <person name="Gottschalk G."/>
            <person name="Borriss R."/>
        </authorList>
    </citation>
    <scope>NUCLEOTIDE SEQUENCE [LARGE SCALE GENOMIC DNA]</scope>
    <source>
        <strain>DSM 23117 / BGSC 10A6 / LMG 26770 / FZB42</strain>
    </source>
</reference>
<name>DAPEL_BACVZ</name>
<feature type="chain" id="PRO_0000376735" description="N-acetyldiaminopimelate deacetylase">
    <location>
        <begin position="1"/>
        <end position="374"/>
    </location>
</feature>
<feature type="active site" evidence="1">
    <location>
        <position position="69"/>
    </location>
</feature>
<feature type="active site" description="Proton acceptor" evidence="1">
    <location>
        <position position="128"/>
    </location>
</feature>
<dbReference type="EC" id="3.5.1.47" evidence="1"/>
<dbReference type="EMBL" id="CP000560">
    <property type="protein sequence ID" value="ABS73759.1"/>
    <property type="molecule type" value="Genomic_DNA"/>
</dbReference>
<dbReference type="RefSeq" id="WP_012117444.1">
    <property type="nucleotide sequence ID" value="NC_009725.2"/>
</dbReference>
<dbReference type="SMR" id="A7Z433"/>
<dbReference type="MEROPS" id="M20.A27"/>
<dbReference type="GeneID" id="93080530"/>
<dbReference type="KEGG" id="bay:RBAM_013960"/>
<dbReference type="HOGENOM" id="CLU_023257_0_1_9"/>
<dbReference type="UniPathway" id="UPA00034">
    <property type="reaction ID" value="UER00024"/>
</dbReference>
<dbReference type="Proteomes" id="UP000001120">
    <property type="component" value="Chromosome"/>
</dbReference>
<dbReference type="GO" id="GO:0050118">
    <property type="term" value="F:N-acetyldiaminopimelate deacetylase activity"/>
    <property type="evidence" value="ECO:0007669"/>
    <property type="project" value="UniProtKB-UniRule"/>
</dbReference>
<dbReference type="GO" id="GO:0019877">
    <property type="term" value="P:diaminopimelate biosynthetic process"/>
    <property type="evidence" value="ECO:0007669"/>
    <property type="project" value="UniProtKB-UniRule"/>
</dbReference>
<dbReference type="GO" id="GO:0009089">
    <property type="term" value="P:lysine biosynthetic process via diaminopimelate"/>
    <property type="evidence" value="ECO:0007669"/>
    <property type="project" value="UniProtKB-UniRule"/>
</dbReference>
<dbReference type="CDD" id="cd05670">
    <property type="entry name" value="M20_Acy1_YkuR-like"/>
    <property type="match status" value="1"/>
</dbReference>
<dbReference type="FunFam" id="3.30.70.360:FF:000001">
    <property type="entry name" value="N-acetyldiaminopimelate deacetylase"/>
    <property type="match status" value="1"/>
</dbReference>
<dbReference type="Gene3D" id="3.30.70.360">
    <property type="match status" value="1"/>
</dbReference>
<dbReference type="Gene3D" id="3.40.630.10">
    <property type="entry name" value="Zn peptidases"/>
    <property type="match status" value="1"/>
</dbReference>
<dbReference type="HAMAP" id="MF_01692">
    <property type="entry name" value="DapEL"/>
    <property type="match status" value="1"/>
</dbReference>
<dbReference type="InterPro" id="IPR023905">
    <property type="entry name" value="AcetylDAP_deacetylase"/>
</dbReference>
<dbReference type="InterPro" id="IPR017439">
    <property type="entry name" value="Amidohydrolase"/>
</dbReference>
<dbReference type="InterPro" id="IPR036264">
    <property type="entry name" value="Bact_exopeptidase_dim_dom"/>
</dbReference>
<dbReference type="InterPro" id="IPR002933">
    <property type="entry name" value="Peptidase_M20"/>
</dbReference>
<dbReference type="InterPro" id="IPR011650">
    <property type="entry name" value="Peptidase_M20_dimer"/>
</dbReference>
<dbReference type="NCBIfam" id="TIGR01891">
    <property type="entry name" value="amidohydrolases"/>
    <property type="match status" value="1"/>
</dbReference>
<dbReference type="PANTHER" id="PTHR11014:SF98">
    <property type="entry name" value="N-ACETYLDIAMINOPIMELATE DEACETYLASE"/>
    <property type="match status" value="1"/>
</dbReference>
<dbReference type="PANTHER" id="PTHR11014">
    <property type="entry name" value="PEPTIDASE M20 FAMILY MEMBER"/>
    <property type="match status" value="1"/>
</dbReference>
<dbReference type="Pfam" id="PF07687">
    <property type="entry name" value="M20_dimer"/>
    <property type="match status" value="1"/>
</dbReference>
<dbReference type="Pfam" id="PF01546">
    <property type="entry name" value="Peptidase_M20"/>
    <property type="match status" value="1"/>
</dbReference>
<dbReference type="PIRSF" id="PIRSF005962">
    <property type="entry name" value="Pept_M20D_amidohydro"/>
    <property type="match status" value="1"/>
</dbReference>
<dbReference type="SUPFAM" id="SSF55031">
    <property type="entry name" value="Bacterial exopeptidase dimerisation domain"/>
    <property type="match status" value="1"/>
</dbReference>
<dbReference type="SUPFAM" id="SSF53187">
    <property type="entry name" value="Zn-dependent exopeptidases"/>
    <property type="match status" value="1"/>
</dbReference>